<keyword id="KW-0963">Cytoplasm</keyword>
<keyword id="KW-0804">Transcription</keyword>
<keyword id="KW-0805">Transcription regulation</keyword>
<gene>
    <name evidence="1" type="primary">rsd</name>
    <name type="ordered locus">SPC_3996</name>
</gene>
<proteinExistence type="inferred from homology"/>
<evidence type="ECO:0000255" key="1">
    <source>
        <dbReference type="HAMAP-Rule" id="MF_01181"/>
    </source>
</evidence>
<name>RSD_SALPC</name>
<feature type="chain" id="PRO_1000164438" description="Regulator of sigma D">
    <location>
        <begin position="1"/>
        <end position="162"/>
    </location>
</feature>
<protein>
    <recommendedName>
        <fullName evidence="1">Regulator of sigma D</fullName>
    </recommendedName>
</protein>
<reference key="1">
    <citation type="journal article" date="2009" name="PLoS ONE">
        <title>Salmonella paratyphi C: genetic divergence from Salmonella choleraesuis and pathogenic convergence with Salmonella typhi.</title>
        <authorList>
            <person name="Liu W.-Q."/>
            <person name="Feng Y."/>
            <person name="Wang Y."/>
            <person name="Zou Q.-H."/>
            <person name="Chen F."/>
            <person name="Guo J.-T."/>
            <person name="Peng Y.-H."/>
            <person name="Jin Y."/>
            <person name="Li Y.-G."/>
            <person name="Hu S.-N."/>
            <person name="Johnston R.N."/>
            <person name="Liu G.-R."/>
            <person name="Liu S.-L."/>
        </authorList>
    </citation>
    <scope>NUCLEOTIDE SEQUENCE [LARGE SCALE GENOMIC DNA]</scope>
    <source>
        <strain>RKS4594</strain>
    </source>
</reference>
<organism>
    <name type="scientific">Salmonella paratyphi C (strain RKS4594)</name>
    <dbReference type="NCBI Taxonomy" id="476213"/>
    <lineage>
        <taxon>Bacteria</taxon>
        <taxon>Pseudomonadati</taxon>
        <taxon>Pseudomonadota</taxon>
        <taxon>Gammaproteobacteria</taxon>
        <taxon>Enterobacterales</taxon>
        <taxon>Enterobacteriaceae</taxon>
        <taxon>Salmonella</taxon>
    </lineage>
</organism>
<dbReference type="EMBL" id="CP000857">
    <property type="protein sequence ID" value="ACN48063.1"/>
    <property type="molecule type" value="Genomic_DNA"/>
</dbReference>
<dbReference type="RefSeq" id="WP_000934317.1">
    <property type="nucleotide sequence ID" value="NC_012125.1"/>
</dbReference>
<dbReference type="SMR" id="C0Q2S7"/>
<dbReference type="KEGG" id="sei:SPC_3996"/>
<dbReference type="HOGENOM" id="CLU_142729_0_0_6"/>
<dbReference type="Proteomes" id="UP000001599">
    <property type="component" value="Chromosome"/>
</dbReference>
<dbReference type="GO" id="GO:0005737">
    <property type="term" value="C:cytoplasm"/>
    <property type="evidence" value="ECO:0007669"/>
    <property type="project" value="UniProtKB-SubCell"/>
</dbReference>
<dbReference type="GO" id="GO:0006355">
    <property type="term" value="P:regulation of DNA-templated transcription"/>
    <property type="evidence" value="ECO:0007669"/>
    <property type="project" value="InterPro"/>
</dbReference>
<dbReference type="FunFam" id="1.20.120.1370:FF:000001">
    <property type="entry name" value="Regulator of sigma D"/>
    <property type="match status" value="1"/>
</dbReference>
<dbReference type="Gene3D" id="1.20.120.1370">
    <property type="entry name" value="Regulator of RNA polymerase sigma(70) subunit, domain 4"/>
    <property type="match status" value="1"/>
</dbReference>
<dbReference type="HAMAP" id="MF_01181">
    <property type="entry name" value="Rsd"/>
    <property type="match status" value="1"/>
</dbReference>
<dbReference type="InterPro" id="IPR038309">
    <property type="entry name" value="Rsd/AlgQ_sf"/>
</dbReference>
<dbReference type="InterPro" id="IPR023785">
    <property type="entry name" value="Sigma70_reg_Rsd"/>
</dbReference>
<dbReference type="InterPro" id="IPR007448">
    <property type="entry name" value="Sigma70_reg_Rsd_AlgQ"/>
</dbReference>
<dbReference type="NCBIfam" id="NF008723">
    <property type="entry name" value="PRK11718.1"/>
    <property type="match status" value="1"/>
</dbReference>
<dbReference type="Pfam" id="PF04353">
    <property type="entry name" value="Rsd_AlgQ"/>
    <property type="match status" value="1"/>
</dbReference>
<dbReference type="PIRSF" id="PIRSF016548">
    <property type="entry name" value="Rsd_AlgQ"/>
    <property type="match status" value="1"/>
</dbReference>
<comment type="function">
    <text evidence="1">Binds RpoD and negatively regulates RpoD-mediated transcription activation by preventing the interaction between the primary sigma factor RpoD with the catalytic core of the RNA polymerase and with promoter DNA. May be involved in replacement of the RNA polymerase sigma subunit from RpoD to RpoS during the transition from exponential growth to the stationary phase.</text>
</comment>
<comment type="subunit">
    <text evidence="1">Interacts with RpoD.</text>
</comment>
<comment type="subcellular location">
    <subcellularLocation>
        <location evidence="1">Cytoplasm</location>
    </subcellularLocation>
</comment>
<comment type="similarity">
    <text evidence="1">Belongs to the Rsd/AlgQ family.</text>
</comment>
<sequence>MLNQLENLTERVGGSNKLVDRWLDVRKHLLVAYYNLVGIKPGKESYMRLNEKALDNFCQSLVDYLSAGHFSIYERILHKLEGNGQLLHAAKIWPLLEDNTQRIMDYYDTSLETAIDHDNCLEFQQALSDIGEALEARFVLEDKLIMLVFDAMHDGARVKRPA</sequence>
<accession>C0Q2S7</accession>